<sequence length="179" mass="20751">MNESKRENIQVINIGDCRAVLCKNGLAIPLNKDHKPIWPDEKRRIDRVNEKYETNEKIHFDAGDWRIGDLSVSRSFGDLDNTPYVTHVPDLFDYQLQSDDEFIIMACDGVWDVLENHEAINFVRDHRNDNHTEFYSIPGKYPNREAFESDNISRKLASYAIARGSTDNVSVIIIFFSKE</sequence>
<evidence type="ECO:0000255" key="1">
    <source>
        <dbReference type="PROSITE-ProRule" id="PRU01082"/>
    </source>
</evidence>
<evidence type="ECO:0000269" key="2">
    <source>
    </source>
</evidence>
<protein>
    <recommendedName>
        <fullName>PP2C-like domain-containing protein R307</fullName>
    </recommendedName>
</protein>
<organism>
    <name type="scientific">Acanthamoeba polyphaga mimivirus</name>
    <name type="common">APMV</name>
    <dbReference type="NCBI Taxonomy" id="212035"/>
    <lineage>
        <taxon>Viruses</taxon>
        <taxon>Varidnaviria</taxon>
        <taxon>Bamfordvirae</taxon>
        <taxon>Nucleocytoviricota</taxon>
        <taxon>Megaviricetes</taxon>
        <taxon>Imitervirales</taxon>
        <taxon>Mimiviridae</taxon>
        <taxon>Megamimivirinae</taxon>
        <taxon>Mimivirus</taxon>
        <taxon>Mimivirus bradfordmassiliense</taxon>
    </lineage>
</organism>
<reference key="1">
    <citation type="journal article" date="2004" name="Science">
        <title>The 1.2-megabase genome sequence of Mimivirus.</title>
        <authorList>
            <person name="Raoult D."/>
            <person name="Audic S."/>
            <person name="Robert C."/>
            <person name="Abergel C."/>
            <person name="Renesto P."/>
            <person name="Ogata H."/>
            <person name="La Scola B."/>
            <person name="Susan M."/>
            <person name="Claverie J.-M."/>
        </authorList>
    </citation>
    <scope>NUCLEOTIDE SEQUENCE [LARGE SCALE GENOMIC DNA]</scope>
    <source>
        <strain>Rowbotham-Bradford</strain>
    </source>
</reference>
<reference key="2">
    <citation type="journal article" date="2006" name="J. Virol.">
        <title>Mimivirus giant particles incorporate a large fraction of anonymous and unique gene products.</title>
        <authorList>
            <person name="Renesto P."/>
            <person name="Abergel C."/>
            <person name="Decloquement P."/>
            <person name="Moinier D."/>
            <person name="Azza S."/>
            <person name="Ogata H."/>
            <person name="Fourquet P."/>
            <person name="Gorvel J.-P."/>
            <person name="Claverie J.-M."/>
            <person name="Raoult D."/>
        </authorList>
    </citation>
    <scope>IDENTIFICATION BY MASS SPECTROMETRY [LARGE SCALE ANALYSIS]</scope>
    <scope>SUBCELLULAR LOCATION</scope>
</reference>
<organismHost>
    <name type="scientific">Acanthamoeba polyphaga</name>
    <name type="common">Amoeba</name>
    <dbReference type="NCBI Taxonomy" id="5757"/>
</organismHost>
<accession>Q5UPZ7</accession>
<keyword id="KW-1185">Reference proteome</keyword>
<keyword id="KW-0946">Virion</keyword>
<name>YR307_MIMIV</name>
<dbReference type="EMBL" id="AY653733">
    <property type="protein sequence ID" value="AAV50579.1"/>
    <property type="molecule type" value="Genomic_DNA"/>
</dbReference>
<dbReference type="SMR" id="Q5UPZ7"/>
<dbReference type="Proteomes" id="UP000001134">
    <property type="component" value="Genome"/>
</dbReference>
<dbReference type="GO" id="GO:0044423">
    <property type="term" value="C:virion component"/>
    <property type="evidence" value="ECO:0007669"/>
    <property type="project" value="UniProtKB-KW"/>
</dbReference>
<dbReference type="GO" id="GO:0004722">
    <property type="term" value="F:protein serine/threonine phosphatase activity"/>
    <property type="evidence" value="ECO:0007669"/>
    <property type="project" value="InterPro"/>
</dbReference>
<dbReference type="CDD" id="cd00143">
    <property type="entry name" value="PP2Cc"/>
    <property type="match status" value="1"/>
</dbReference>
<dbReference type="Gene3D" id="3.60.40.10">
    <property type="entry name" value="PPM-type phosphatase domain"/>
    <property type="match status" value="1"/>
</dbReference>
<dbReference type="InterPro" id="IPR015655">
    <property type="entry name" value="PP2C"/>
</dbReference>
<dbReference type="InterPro" id="IPR036457">
    <property type="entry name" value="PPM-type-like_dom_sf"/>
</dbReference>
<dbReference type="InterPro" id="IPR001932">
    <property type="entry name" value="PPM-type_phosphatase-like_dom"/>
</dbReference>
<dbReference type="PANTHER" id="PTHR47992">
    <property type="entry name" value="PROTEIN PHOSPHATASE"/>
    <property type="match status" value="1"/>
</dbReference>
<dbReference type="Pfam" id="PF00481">
    <property type="entry name" value="PP2C"/>
    <property type="match status" value="1"/>
</dbReference>
<dbReference type="SMART" id="SM00332">
    <property type="entry name" value="PP2Cc"/>
    <property type="match status" value="1"/>
</dbReference>
<dbReference type="SUPFAM" id="SSF81606">
    <property type="entry name" value="PP2C-like"/>
    <property type="match status" value="1"/>
</dbReference>
<dbReference type="PROSITE" id="PS51746">
    <property type="entry name" value="PPM_2"/>
    <property type="match status" value="1"/>
</dbReference>
<comment type="subcellular location">
    <subcellularLocation>
        <location evidence="2">Virion</location>
    </subcellularLocation>
</comment>
<feature type="chain" id="PRO_0000253417" description="PP2C-like domain-containing protein R307">
    <location>
        <begin position="1"/>
        <end position="179"/>
    </location>
</feature>
<feature type="domain" description="PPM-type phosphatase" evidence="1">
    <location>
        <begin position="1"/>
        <end position="176"/>
    </location>
</feature>
<gene>
    <name type="ordered locus">MIMI_R307</name>
</gene>
<proteinExistence type="evidence at protein level"/>